<organismHost>
    <name type="scientific">Ornithodoros</name>
    <name type="common">relapsing fever ticks</name>
    <dbReference type="NCBI Taxonomy" id="6937"/>
</organismHost>
<organismHost>
    <name type="scientific">Phacochoerus aethiopicus</name>
    <name type="common">Warthog</name>
    <dbReference type="NCBI Taxonomy" id="85517"/>
</organismHost>
<organismHost>
    <name type="scientific">Phacochoerus africanus</name>
    <name type="common">Warthog</name>
    <dbReference type="NCBI Taxonomy" id="41426"/>
</organismHost>
<organismHost>
    <name type="scientific">Potamochoerus larvatus</name>
    <name type="common">Bushpig</name>
    <dbReference type="NCBI Taxonomy" id="273792"/>
</organismHost>
<organismHost>
    <name type="scientific">Sus scrofa</name>
    <name type="common">Pig</name>
    <dbReference type="NCBI Taxonomy" id="9823"/>
</organismHost>
<protein>
    <recommendedName>
        <fullName>Uncharacterized protein D79L</fullName>
        <shortName>pD79L</shortName>
    </recommendedName>
</protein>
<proteinExistence type="inferred from homology"/>
<comment type="similarity">
    <text evidence="1">Belongs to the asfivirus D79L family.</text>
</comment>
<name>VF79_ASFK5</name>
<organism>
    <name type="scientific">African swine fever virus (isolate Pig/Kenya/KEN-50/1950)</name>
    <name type="common">ASFV</name>
    <dbReference type="NCBI Taxonomy" id="561445"/>
    <lineage>
        <taxon>Viruses</taxon>
        <taxon>Varidnaviria</taxon>
        <taxon>Bamfordvirae</taxon>
        <taxon>Nucleocytoviricota</taxon>
        <taxon>Pokkesviricetes</taxon>
        <taxon>Asfuvirales</taxon>
        <taxon>Asfarviridae</taxon>
        <taxon>Asfivirus</taxon>
        <taxon>African swine fever virus</taxon>
    </lineage>
</organism>
<sequence length="79" mass="9328">MNKTIEYQKEFLKENNQLLNIPIKKNILKEILQNDEQDTIITNCITKEVSINLDLIKNPKVLYSIYIMVVEYLKSINIT</sequence>
<accession>P0CAK3</accession>
<gene>
    <name type="ordered locus">Ken-116</name>
</gene>
<evidence type="ECO:0000305" key="1"/>
<dbReference type="EMBL" id="AY261360">
    <property type="status" value="NOT_ANNOTATED_CDS"/>
    <property type="molecule type" value="Genomic_DNA"/>
</dbReference>
<dbReference type="Proteomes" id="UP000000861">
    <property type="component" value="Segment"/>
</dbReference>
<reference key="1">
    <citation type="submission" date="2003-03" db="EMBL/GenBank/DDBJ databases">
        <title>African swine fever virus genomes.</title>
        <authorList>
            <person name="Kutish G.F."/>
            <person name="Rock D.L."/>
        </authorList>
    </citation>
    <scope>NUCLEOTIDE SEQUENCE [LARGE SCALE GENOMIC DNA]</scope>
</reference>
<feature type="chain" id="PRO_0000373730" description="Uncharacterized protein D79L">
    <location>
        <begin position="1"/>
        <end position="79"/>
    </location>
</feature>